<organism>
    <name type="scientific">Homo sapiens</name>
    <name type="common">Human</name>
    <dbReference type="NCBI Taxonomy" id="9606"/>
    <lineage>
        <taxon>Eukaryota</taxon>
        <taxon>Metazoa</taxon>
        <taxon>Chordata</taxon>
        <taxon>Craniata</taxon>
        <taxon>Vertebrata</taxon>
        <taxon>Euteleostomi</taxon>
        <taxon>Mammalia</taxon>
        <taxon>Eutheria</taxon>
        <taxon>Euarchontoglires</taxon>
        <taxon>Primates</taxon>
        <taxon>Haplorrhini</taxon>
        <taxon>Catarrhini</taxon>
        <taxon>Hominidae</taxon>
        <taxon>Homo</taxon>
    </lineage>
</organism>
<protein>
    <recommendedName>
        <fullName evidence="2">RNA polymerase II subunit A C-terminal domain phosphatase SSU72 like protein 4</fullName>
    </recommendedName>
    <alternativeName>
        <fullName evidence="2">RNA polymerase II subunit A C-terminal domain phosphatase SSU72L4</fullName>
        <shortName>CTD phosphatase SSU72L4</shortName>
        <ecNumber evidence="1">3.1.3.16</ecNumber>
    </alternativeName>
</protein>
<name>S72L4_HUMAN</name>
<sequence>MLSSTLRVAVVCVSNVNRSMEAHSILRRKGLSVRSFGTESHVRLPGPRPNRPVVYDFATTYKEMYNDLLRKDRERYTRNGILHILGRNERIKPGPERFQECTDFFDVIFTCEESVYDTVVEDLCSREQQTFQPVHVINMDIQDTLEDATLGAFLICEICQCLQQSDDMEDNLEELLLQMEEKAGKSFLHTVCFY</sequence>
<proteinExistence type="inferred from homology"/>
<gene>
    <name evidence="3" type="primary">SSU72L4</name>
</gene>
<reference key="1">
    <citation type="journal article" date="2006" name="Nature">
        <title>Human chromosome 11 DNA sequence and analysis including novel gene identification.</title>
        <authorList>
            <person name="Taylor T.D."/>
            <person name="Noguchi H."/>
            <person name="Totoki Y."/>
            <person name="Toyoda A."/>
            <person name="Kuroki Y."/>
            <person name="Dewar K."/>
            <person name="Lloyd C."/>
            <person name="Itoh T."/>
            <person name="Takeda T."/>
            <person name="Kim D.-W."/>
            <person name="She X."/>
            <person name="Barlow K.F."/>
            <person name="Bloom T."/>
            <person name="Bruford E."/>
            <person name="Chang J.L."/>
            <person name="Cuomo C.A."/>
            <person name="Eichler E."/>
            <person name="FitzGerald M.G."/>
            <person name="Jaffe D.B."/>
            <person name="LaButti K."/>
            <person name="Nicol R."/>
            <person name="Park H.-S."/>
            <person name="Seaman C."/>
            <person name="Sougnez C."/>
            <person name="Yang X."/>
            <person name="Zimmer A.R."/>
            <person name="Zody M.C."/>
            <person name="Birren B.W."/>
            <person name="Nusbaum C."/>
            <person name="Fujiyama A."/>
            <person name="Hattori M."/>
            <person name="Rogers J."/>
            <person name="Lander E.S."/>
            <person name="Sakaki Y."/>
        </authorList>
    </citation>
    <scope>NUCLEOTIDE SEQUENCE [LARGE SCALE GENOMIC DNA]</scope>
</reference>
<evidence type="ECO:0000250" key="1">
    <source>
        <dbReference type="UniProtKB" id="Q9NP77"/>
    </source>
</evidence>
<evidence type="ECO:0000305" key="2"/>
<evidence type="ECO:0000312" key="3">
    <source>
        <dbReference type="HGNC" id="HGNC:43623"/>
    </source>
</evidence>
<accession>A0A1W2PQC6</accession>
<feature type="chain" id="PRO_0000457673" description="RNA polymerase II subunit A C-terminal domain phosphatase SSU72 like protein 4">
    <location>
        <begin position="1"/>
        <end position="194"/>
    </location>
</feature>
<dbReference type="EC" id="3.1.3.16" evidence="1"/>
<dbReference type="EMBL" id="AC018793">
    <property type="status" value="NOT_ANNOTATED_CDS"/>
    <property type="molecule type" value="Genomic_DNA"/>
</dbReference>
<dbReference type="RefSeq" id="NP_001400930.1">
    <property type="nucleotide sequence ID" value="NM_001414001.1"/>
</dbReference>
<dbReference type="SMR" id="A0A1W2PQC6"/>
<dbReference type="FunCoup" id="A0A1W2PQC6">
    <property type="interactions" value="262"/>
</dbReference>
<dbReference type="STRING" id="9606.ENSP00000491663"/>
<dbReference type="BioMuta" id="ENSG00000283873"/>
<dbReference type="MassIVE" id="A0A1W2PQC6"/>
<dbReference type="Ensembl" id="ENST00000638166.2">
    <property type="protein sequence ID" value="ENSP00000491663.1"/>
    <property type="gene ID" value="ENSG00000283873.2"/>
</dbReference>
<dbReference type="GeneID" id="441584"/>
<dbReference type="MANE-Select" id="ENST00000638166.2">
    <property type="protein sequence ID" value="ENSP00000491663.1"/>
    <property type="RefSeq nucleotide sequence ID" value="NM_001414001.1"/>
    <property type="RefSeq protein sequence ID" value="NP_001400930.1"/>
</dbReference>
<dbReference type="AGR" id="HGNC:43623"/>
<dbReference type="GeneCards" id="SSU72L4"/>
<dbReference type="HGNC" id="HGNC:43623">
    <property type="gene designation" value="SSU72L4"/>
</dbReference>
<dbReference type="VEuPathDB" id="HostDB:ENSG00000283873"/>
<dbReference type="GeneTree" id="ENSGT00390000010165"/>
<dbReference type="InParanoid" id="A0A1W2PQC6"/>
<dbReference type="OMA" id="CCAMNQN"/>
<dbReference type="PAN-GO" id="A0A1W2PQC6">
    <property type="GO annotations" value="5 GO annotations based on evolutionary models"/>
</dbReference>
<dbReference type="PRO" id="PR:A0A1W2PQC6"/>
<dbReference type="Proteomes" id="UP000005640">
    <property type="component" value="Chromosome 11"/>
</dbReference>
<dbReference type="RNAct" id="A0A1W2PQC6">
    <property type="molecule type" value="protein"/>
</dbReference>
<dbReference type="Bgee" id="ENSG00000283873">
    <property type="expression patterns" value="Expressed in cell and 6 other cell types or tissues"/>
</dbReference>
<dbReference type="GO" id="GO:0005847">
    <property type="term" value="C:mRNA cleavage and polyadenylation specificity factor complex"/>
    <property type="evidence" value="ECO:0000318"/>
    <property type="project" value="GO_Central"/>
</dbReference>
<dbReference type="GO" id="GO:0008420">
    <property type="term" value="F:RNA polymerase II CTD heptapeptide repeat phosphatase activity"/>
    <property type="evidence" value="ECO:0000318"/>
    <property type="project" value="GO_Central"/>
</dbReference>
<dbReference type="GO" id="GO:0006397">
    <property type="term" value="P:mRNA processing"/>
    <property type="evidence" value="ECO:0007669"/>
    <property type="project" value="UniProtKB-KW"/>
</dbReference>
<dbReference type="GO" id="GO:0006369">
    <property type="term" value="P:termination of RNA polymerase II transcription"/>
    <property type="evidence" value="ECO:0000318"/>
    <property type="project" value="GO_Central"/>
</dbReference>
<dbReference type="FunFam" id="3.40.50.2300:FF:000039">
    <property type="entry name" value="RNA polymerase II subunit A C-terminal domain phosphatase"/>
    <property type="match status" value="1"/>
</dbReference>
<dbReference type="FunFam" id="3.40.50.2300:FF:000066">
    <property type="entry name" value="RNA polymerase II subunit A C-terminal domain phosphatase SSU72"/>
    <property type="match status" value="1"/>
</dbReference>
<dbReference type="Gene3D" id="3.40.50.2300">
    <property type="match status" value="2"/>
</dbReference>
<dbReference type="InterPro" id="IPR036196">
    <property type="entry name" value="Ptyr_pPase_sf"/>
</dbReference>
<dbReference type="InterPro" id="IPR006811">
    <property type="entry name" value="RNA_pol_II_suA"/>
</dbReference>
<dbReference type="PANTHER" id="PTHR20383">
    <property type="entry name" value="RNA POLYMERASE II SUBUNIT A C-TERMINAL DOMAIN PHOSPHATASE"/>
    <property type="match status" value="1"/>
</dbReference>
<dbReference type="Pfam" id="PF04722">
    <property type="entry name" value="Ssu72"/>
    <property type="match status" value="1"/>
</dbReference>
<dbReference type="SUPFAM" id="SSF52788">
    <property type="entry name" value="Phosphotyrosine protein phosphatases I"/>
    <property type="match status" value="1"/>
</dbReference>
<keyword id="KW-0378">Hydrolase</keyword>
<keyword id="KW-0507">mRNA processing</keyword>
<keyword id="KW-0539">Nucleus</keyword>
<keyword id="KW-0904">Protein phosphatase</keyword>
<keyword id="KW-1185">Reference proteome</keyword>
<comment type="function">
    <text evidence="1">Protein phosphatase that catalyzes the dephosphorylation of the C-terminal domain of RNA polymerase II. Plays a role in RNA processing and termination.</text>
</comment>
<comment type="catalytic activity">
    <reaction evidence="1">
        <text>O-phospho-L-seryl-[protein] + H2O = L-seryl-[protein] + phosphate</text>
        <dbReference type="Rhea" id="RHEA:20629"/>
        <dbReference type="Rhea" id="RHEA-COMP:9863"/>
        <dbReference type="Rhea" id="RHEA-COMP:11604"/>
        <dbReference type="ChEBI" id="CHEBI:15377"/>
        <dbReference type="ChEBI" id="CHEBI:29999"/>
        <dbReference type="ChEBI" id="CHEBI:43474"/>
        <dbReference type="ChEBI" id="CHEBI:83421"/>
        <dbReference type="EC" id="3.1.3.16"/>
    </reaction>
</comment>
<comment type="catalytic activity">
    <reaction evidence="1">
        <text>O-phospho-L-threonyl-[protein] + H2O = L-threonyl-[protein] + phosphate</text>
        <dbReference type="Rhea" id="RHEA:47004"/>
        <dbReference type="Rhea" id="RHEA-COMP:11060"/>
        <dbReference type="Rhea" id="RHEA-COMP:11605"/>
        <dbReference type="ChEBI" id="CHEBI:15377"/>
        <dbReference type="ChEBI" id="CHEBI:30013"/>
        <dbReference type="ChEBI" id="CHEBI:43474"/>
        <dbReference type="ChEBI" id="CHEBI:61977"/>
        <dbReference type="EC" id="3.1.3.16"/>
    </reaction>
</comment>
<comment type="subcellular location">
    <subcellularLocation>
        <location evidence="1">Nucleus</location>
    </subcellularLocation>
</comment>
<comment type="similarity">
    <text evidence="2">Belongs to the SSU72 phosphatase family.</text>
</comment>